<reference key="1">
    <citation type="journal article" date="1992" name="J. Bacteriol.">
        <title>Nucleotide sequence of Streptococcus mutans superoxide dismutase gene and isolation of insertion mutants.</title>
        <authorList>
            <person name="Nakayama K."/>
        </authorList>
    </citation>
    <scope>NUCLEOTIDE SEQUENCE [GENOMIC DNA]</scope>
    <source>
        <strain>GS-5</strain>
    </source>
</reference>
<reference key="2">
    <citation type="journal article" date="2002" name="Proc. Natl. Acad. Sci. U.S.A.">
        <title>Genome sequence of Streptococcus mutans UA159, a cariogenic dental pathogen.</title>
        <authorList>
            <person name="Ajdic D.J."/>
            <person name="McShan W.M."/>
            <person name="McLaughlin R.E."/>
            <person name="Savic G."/>
            <person name="Chang J."/>
            <person name="Carson M.B."/>
            <person name="Primeaux C."/>
            <person name="Tian R."/>
            <person name="Kenton S."/>
            <person name="Jia H.G."/>
            <person name="Lin S.P."/>
            <person name="Qian Y."/>
            <person name="Li S."/>
            <person name="Zhu H."/>
            <person name="Najar F.Z."/>
            <person name="Lai H."/>
            <person name="White J."/>
            <person name="Roe B.A."/>
            <person name="Ferretti J.J."/>
        </authorList>
    </citation>
    <scope>NUCLEOTIDE SEQUENCE [LARGE SCALE GENOMIC DNA]</scope>
    <source>
        <strain>ATCC 700610 / UA159</strain>
    </source>
</reference>
<reference key="3">
    <citation type="journal article" date="1986" name="J. Biol. Chem.">
        <title>A Streptococcus mutans superoxide dismutase that is active with either manganese or iron as a cofactor.</title>
        <authorList>
            <person name="Martin M.E."/>
            <person name="Byers B.R."/>
            <person name="Olson M.O.J."/>
            <person name="Salin M.L."/>
            <person name="Arceneaux J.E.L."/>
            <person name="Tolbert C."/>
        </authorList>
    </citation>
    <scope>PROTEIN SEQUENCE OF 2-23</scope>
</reference>
<proteinExistence type="evidence at protein level"/>
<comment type="function">
    <text evidence="1">Destroys superoxide anion radicals which are normally produced within the cells and which are toxic to biological systems. Catalyzes the dismutation of superoxide anion radicals into O2 and H2O2 by successive reduction and oxidation of the transition metal ion at the active site.</text>
</comment>
<comment type="catalytic activity">
    <reaction evidence="1">
        <text>2 superoxide + 2 H(+) = H2O2 + O2</text>
        <dbReference type="Rhea" id="RHEA:20696"/>
        <dbReference type="ChEBI" id="CHEBI:15378"/>
        <dbReference type="ChEBI" id="CHEBI:15379"/>
        <dbReference type="ChEBI" id="CHEBI:16240"/>
        <dbReference type="ChEBI" id="CHEBI:18421"/>
        <dbReference type="EC" id="1.15.1.1"/>
    </reaction>
    <physiologicalReaction direction="left-to-right" evidence="1">
        <dbReference type="Rhea" id="RHEA:20697"/>
    </physiologicalReaction>
</comment>
<comment type="cofactor">
    <cofactor evidence="1">
        <name>Mn(2+)</name>
        <dbReference type="ChEBI" id="CHEBI:29035"/>
    </cofactor>
    <cofactor evidence="1">
        <name>Fe(3+)</name>
        <dbReference type="ChEBI" id="CHEBI:29034"/>
    </cofactor>
    <text evidence="1">Binds 1 Mn(2+) or Fe(3+) ion per subunit.</text>
</comment>
<comment type="similarity">
    <text evidence="3">Belongs to the iron/manganese superoxide dismutase family.</text>
</comment>
<keyword id="KW-0002">3D-structure</keyword>
<keyword id="KW-0903">Direct protein sequencing</keyword>
<keyword id="KW-0408">Iron</keyword>
<keyword id="KW-0464">Manganese</keyword>
<keyword id="KW-0479">Metal-binding</keyword>
<keyword id="KW-0560">Oxidoreductase</keyword>
<keyword id="KW-1185">Reference proteome</keyword>
<feature type="initiator methionine" description="Removed" evidence="2">
    <location>
        <position position="1"/>
    </location>
</feature>
<feature type="chain" id="PRO_0000160094" description="Superoxide dismutase [Mn/Fe]">
    <location>
        <begin position="2"/>
        <end position="203"/>
    </location>
</feature>
<feature type="binding site" evidence="1">
    <location>
        <position position="27"/>
    </location>
    <ligand>
        <name>Fe(3+)</name>
        <dbReference type="ChEBI" id="CHEBI:29034"/>
    </ligand>
</feature>
<feature type="binding site" evidence="1">
    <location>
        <position position="27"/>
    </location>
    <ligand>
        <name>Mn(2+)</name>
        <dbReference type="ChEBI" id="CHEBI:29035"/>
    </ligand>
</feature>
<feature type="binding site" evidence="1">
    <location>
        <position position="81"/>
    </location>
    <ligand>
        <name>Fe(3+)</name>
        <dbReference type="ChEBI" id="CHEBI:29034"/>
    </ligand>
</feature>
<feature type="binding site" evidence="1">
    <location>
        <position position="81"/>
    </location>
    <ligand>
        <name>Mn(2+)</name>
        <dbReference type="ChEBI" id="CHEBI:29035"/>
    </ligand>
</feature>
<feature type="binding site" evidence="1">
    <location>
        <position position="163"/>
    </location>
    <ligand>
        <name>Fe(3+)</name>
        <dbReference type="ChEBI" id="CHEBI:29034"/>
    </ligand>
</feature>
<feature type="binding site" evidence="1">
    <location>
        <position position="163"/>
    </location>
    <ligand>
        <name>Mn(2+)</name>
        <dbReference type="ChEBI" id="CHEBI:29035"/>
    </ligand>
</feature>
<feature type="binding site" evidence="1">
    <location>
        <position position="167"/>
    </location>
    <ligand>
        <name>Fe(3+)</name>
        <dbReference type="ChEBI" id="CHEBI:29034"/>
    </ligand>
</feature>
<feature type="binding site" evidence="1">
    <location>
        <position position="167"/>
    </location>
    <ligand>
        <name>Mn(2+)</name>
        <dbReference type="ChEBI" id="CHEBI:29035"/>
    </ligand>
</feature>
<feature type="sequence conflict" description="In Ref. 3; AA sequence." evidence="3" ref="3">
    <original>L</original>
    <variation>T</variation>
    <location>
        <position position="4"/>
    </location>
</feature>
<feature type="turn" evidence="4">
    <location>
        <begin position="12"/>
        <end position="18"/>
    </location>
</feature>
<feature type="helix" evidence="4">
    <location>
        <begin position="21"/>
        <end position="29"/>
    </location>
</feature>
<feature type="helix" evidence="4">
    <location>
        <begin position="31"/>
        <end position="45"/>
    </location>
</feature>
<feature type="helix" evidence="4">
    <location>
        <begin position="47"/>
        <end position="49"/>
    </location>
</feature>
<feature type="helix" evidence="4">
    <location>
        <begin position="53"/>
        <end position="58"/>
    </location>
</feature>
<feature type="helix" evidence="4">
    <location>
        <begin position="59"/>
        <end position="62"/>
    </location>
</feature>
<feature type="helix" evidence="4">
    <location>
        <begin position="65"/>
        <end position="87"/>
    </location>
</feature>
<feature type="helix" evidence="4">
    <location>
        <begin position="97"/>
        <end position="107"/>
    </location>
</feature>
<feature type="helix" evidence="4">
    <location>
        <begin position="110"/>
        <end position="123"/>
    </location>
</feature>
<feature type="strand" evidence="4">
    <location>
        <begin position="126"/>
        <end position="134"/>
    </location>
</feature>
<feature type="strand" evidence="4">
    <location>
        <begin position="140"/>
        <end position="146"/>
    </location>
</feature>
<feature type="helix" evidence="4">
    <location>
        <begin position="151"/>
        <end position="154"/>
    </location>
</feature>
<feature type="strand" evidence="4">
    <location>
        <begin position="157"/>
        <end position="163"/>
    </location>
</feature>
<feature type="helix" evidence="4">
    <location>
        <begin position="166"/>
        <end position="168"/>
    </location>
</feature>
<feature type="helix" evidence="4">
    <location>
        <begin position="170"/>
        <end position="173"/>
    </location>
</feature>
<feature type="helix" evidence="4">
    <location>
        <begin position="177"/>
        <end position="184"/>
    </location>
</feature>
<feature type="helix" evidence="4">
    <location>
        <begin position="185"/>
        <end position="187"/>
    </location>
</feature>
<feature type="helix" evidence="4">
    <location>
        <begin position="190"/>
        <end position="202"/>
    </location>
</feature>
<dbReference type="EC" id="1.15.1.1" evidence="1"/>
<dbReference type="EMBL" id="D01037">
    <property type="protein sequence ID" value="BAB86870.1"/>
    <property type="molecule type" value="Genomic_DNA"/>
</dbReference>
<dbReference type="EMBL" id="AE014133">
    <property type="protein sequence ID" value="AAN58363.1"/>
    <property type="molecule type" value="Genomic_DNA"/>
</dbReference>
<dbReference type="PIR" id="A42710">
    <property type="entry name" value="A42710"/>
</dbReference>
<dbReference type="RefSeq" id="NP_721057.1">
    <property type="nucleotide sequence ID" value="NC_004350.2"/>
</dbReference>
<dbReference type="RefSeq" id="WP_002261912.1">
    <property type="nucleotide sequence ID" value="NC_004350.2"/>
</dbReference>
<dbReference type="PDB" id="4YIP">
    <property type="method" value="X-ray"/>
    <property type="resolution" value="2.15 A"/>
    <property type="chains" value="A/B/C/D=1-202"/>
</dbReference>
<dbReference type="PDBsum" id="4YIP"/>
<dbReference type="SMR" id="P09738"/>
<dbReference type="STRING" id="210007.SMU_629"/>
<dbReference type="KEGG" id="smu:SMU_629"/>
<dbReference type="PATRIC" id="fig|210007.7.peg.555"/>
<dbReference type="eggNOG" id="COG0605">
    <property type="taxonomic scope" value="Bacteria"/>
</dbReference>
<dbReference type="HOGENOM" id="CLU_031625_0_1_9"/>
<dbReference type="OrthoDB" id="9803125at2"/>
<dbReference type="PhylomeDB" id="P09738"/>
<dbReference type="Proteomes" id="UP000002512">
    <property type="component" value="Chromosome"/>
</dbReference>
<dbReference type="GO" id="GO:0005737">
    <property type="term" value="C:cytoplasm"/>
    <property type="evidence" value="ECO:0007669"/>
    <property type="project" value="TreeGrafter"/>
</dbReference>
<dbReference type="GO" id="GO:0046872">
    <property type="term" value="F:metal ion binding"/>
    <property type="evidence" value="ECO:0007669"/>
    <property type="project" value="UniProtKB-KW"/>
</dbReference>
<dbReference type="GO" id="GO:0004784">
    <property type="term" value="F:superoxide dismutase activity"/>
    <property type="evidence" value="ECO:0007669"/>
    <property type="project" value="UniProtKB-EC"/>
</dbReference>
<dbReference type="FunFam" id="1.10.287.990:FF:000001">
    <property type="entry name" value="Superoxide dismutase"/>
    <property type="match status" value="1"/>
</dbReference>
<dbReference type="FunFam" id="3.55.40.20:FF:000001">
    <property type="entry name" value="Superoxide dismutase"/>
    <property type="match status" value="1"/>
</dbReference>
<dbReference type="Gene3D" id="1.10.287.990">
    <property type="entry name" value="Fe,Mn superoxide dismutase (SOD) domain"/>
    <property type="match status" value="1"/>
</dbReference>
<dbReference type="Gene3D" id="3.55.40.20">
    <property type="entry name" value="Iron/manganese superoxide dismutase, C-terminal domain"/>
    <property type="match status" value="1"/>
</dbReference>
<dbReference type="InterPro" id="IPR001189">
    <property type="entry name" value="Mn/Fe_SOD"/>
</dbReference>
<dbReference type="InterPro" id="IPR019833">
    <property type="entry name" value="Mn/Fe_SOD_BS"/>
</dbReference>
<dbReference type="InterPro" id="IPR019832">
    <property type="entry name" value="Mn/Fe_SOD_C"/>
</dbReference>
<dbReference type="InterPro" id="IPR019831">
    <property type="entry name" value="Mn/Fe_SOD_N"/>
</dbReference>
<dbReference type="InterPro" id="IPR036324">
    <property type="entry name" value="Mn/Fe_SOD_N_sf"/>
</dbReference>
<dbReference type="InterPro" id="IPR036314">
    <property type="entry name" value="SOD_C_sf"/>
</dbReference>
<dbReference type="PANTHER" id="PTHR43595">
    <property type="entry name" value="37S RIBOSOMAL PROTEIN S26, MITOCHONDRIAL"/>
    <property type="match status" value="1"/>
</dbReference>
<dbReference type="PANTHER" id="PTHR43595:SF2">
    <property type="entry name" value="SMALL RIBOSOMAL SUBUNIT PROTEIN MS42"/>
    <property type="match status" value="1"/>
</dbReference>
<dbReference type="Pfam" id="PF02777">
    <property type="entry name" value="Sod_Fe_C"/>
    <property type="match status" value="1"/>
</dbReference>
<dbReference type="Pfam" id="PF00081">
    <property type="entry name" value="Sod_Fe_N"/>
    <property type="match status" value="1"/>
</dbReference>
<dbReference type="PIRSF" id="PIRSF000349">
    <property type="entry name" value="SODismutase"/>
    <property type="match status" value="1"/>
</dbReference>
<dbReference type="PRINTS" id="PR01703">
    <property type="entry name" value="MNSODISMTASE"/>
</dbReference>
<dbReference type="SUPFAM" id="SSF54719">
    <property type="entry name" value="Fe,Mn superoxide dismutase (SOD), C-terminal domain"/>
    <property type="match status" value="1"/>
</dbReference>
<dbReference type="SUPFAM" id="SSF46609">
    <property type="entry name" value="Fe,Mn superoxide dismutase (SOD), N-terminal domain"/>
    <property type="match status" value="1"/>
</dbReference>
<dbReference type="PROSITE" id="PS00088">
    <property type="entry name" value="SOD_MN"/>
    <property type="match status" value="1"/>
</dbReference>
<protein>
    <recommendedName>
        <fullName>Superoxide dismutase [Mn/Fe]</fullName>
        <ecNumber evidence="1">1.15.1.1</ecNumber>
    </recommendedName>
</protein>
<accession>P09738</accession>
<accession>Q59791</accession>
<gene>
    <name type="primary">sodA</name>
    <name type="synonym">sod</name>
    <name type="ordered locus">SMU_629</name>
</gene>
<sequence>MAILLPDLPYAYDALEPYIDAETMTLHHDKHHATYVANANAALEKHPEIGENLEVLLADVEQIPADIRQSLINNGGGHLNHALFWELLSPEKTKVTAEVAAAINEAFGSFDDFKAAFTAAATTRFGSGWAWLVVDKEGKLEVTSTANQDTPISQGLKPILALDVWEHAYYLNYRNVRPNYIKAFFEVINWNTVARLYAEALTK</sequence>
<organism>
    <name type="scientific">Streptococcus mutans serotype c (strain ATCC 700610 / UA159)</name>
    <dbReference type="NCBI Taxonomy" id="210007"/>
    <lineage>
        <taxon>Bacteria</taxon>
        <taxon>Bacillati</taxon>
        <taxon>Bacillota</taxon>
        <taxon>Bacilli</taxon>
        <taxon>Lactobacillales</taxon>
        <taxon>Streptococcaceae</taxon>
        <taxon>Streptococcus</taxon>
    </lineage>
</organism>
<name>SODM_STRMU</name>
<evidence type="ECO:0000250" key="1">
    <source>
        <dbReference type="UniProtKB" id="P80293"/>
    </source>
</evidence>
<evidence type="ECO:0000269" key="2">
    <source>
    </source>
</evidence>
<evidence type="ECO:0000305" key="3"/>
<evidence type="ECO:0007829" key="4">
    <source>
        <dbReference type="PDB" id="4YIP"/>
    </source>
</evidence>